<accession>P30231</accession>
<evidence type="ECO:0000250" key="1"/>
<evidence type="ECO:0000269" key="2">
    <source>
    </source>
</evidence>
<evidence type="ECO:0000269" key="3">
    <source>
    </source>
</evidence>
<evidence type="ECO:0000305" key="4"/>
<feature type="chain" id="PRO_0000074246" description="Defensin-like protein 1">
    <location>
        <begin position="1"/>
        <end position="51"/>
    </location>
</feature>
<feature type="modified residue" description="Pyrrolidone carboxylic acid" evidence="2">
    <location>
        <position position="1"/>
    </location>
</feature>
<feature type="disulfide bond" evidence="1">
    <location>
        <begin position="4"/>
        <end position="51"/>
    </location>
</feature>
<feature type="disulfide bond" evidence="1">
    <location>
        <begin position="15"/>
        <end position="36"/>
    </location>
</feature>
<feature type="disulfide bond" evidence="1">
    <location>
        <begin position="21"/>
        <end position="45"/>
    </location>
</feature>
<feature type="disulfide bond" evidence="1">
    <location>
        <begin position="25"/>
        <end position="47"/>
    </location>
</feature>
<keyword id="KW-0929">Antimicrobial</keyword>
<keyword id="KW-0903">Direct protein sequencing</keyword>
<keyword id="KW-1015">Disulfide bond</keyword>
<keyword id="KW-0295">Fungicide</keyword>
<keyword id="KW-0611">Plant defense</keyword>
<keyword id="KW-0873">Pyrrolidone carboxylic acid</keyword>
<protein>
    <recommendedName>
        <fullName>Defensin-like protein 1</fullName>
    </recommendedName>
    <alternativeName>
        <fullName>Cysteine-rich antifungal protein 1</fullName>
        <shortName>AFP1</shortName>
    </alternativeName>
    <alternativeName>
        <fullName>M1</fullName>
    </alternativeName>
</protein>
<proteinExistence type="evidence at protein level"/>
<comment type="function">
    <text>Possesses antifungal activity sensitive to inorganic cations.</text>
</comment>
<comment type="subunit">
    <text>Forms oligomers in its native state.</text>
</comment>
<comment type="mass spectrometry" mass="5677.0" error="1.0" method="Electrospray" evidence="3"/>
<comment type="similarity">
    <text evidence="4">Belongs to the DEFL family.</text>
</comment>
<reference key="1">
    <citation type="journal article" date="1996" name="Int. J. Pept. Protein Res.">
        <title>Purification and mass spectrometry-based sequencing of yellow mustard (Sinapis alba L.) 6 kDa proteins. Identification as antifungal proteins.</title>
        <authorList>
            <person name="Neumann G.M."/>
            <person name="Condron R."/>
            <person name="Polya G.M."/>
        </authorList>
    </citation>
    <scope>PROTEIN SEQUENCE</scope>
    <scope>MASS SPECTROMETRY</scope>
    <source>
        <tissue>Seed</tissue>
    </source>
</reference>
<reference key="2">
    <citation type="journal article" date="1993" name="FEBS Lett.">
        <title>A new family of basic cysteine-rich plant antifungal proteins from Brassicaceae species.</title>
        <authorList>
            <person name="Terras F.R.G."/>
            <person name="Torrekens S."/>
            <person name="van Leuven F."/>
            <person name="Osborn R.W."/>
            <person name="Vanderleyden J."/>
            <person name="Cammue B.P.A."/>
            <person name="Broekaert W.F."/>
        </authorList>
    </citation>
    <scope>PROTEIN SEQUENCE OF 1-25</scope>
    <scope>PYROGLUTAMATE FORMATION AT GLN-1</scope>
    <source>
        <tissue>Seed</tissue>
    </source>
</reference>
<dbReference type="PIR" id="S28993">
    <property type="entry name" value="S28993"/>
</dbReference>
<dbReference type="BMRB" id="P30231"/>
<dbReference type="SMR" id="P30231"/>
<dbReference type="GO" id="GO:0050832">
    <property type="term" value="P:defense response to fungus"/>
    <property type="evidence" value="ECO:0007669"/>
    <property type="project" value="UniProtKB-KW"/>
</dbReference>
<dbReference type="GO" id="GO:0031640">
    <property type="term" value="P:killing of cells of another organism"/>
    <property type="evidence" value="ECO:0007669"/>
    <property type="project" value="UniProtKB-KW"/>
</dbReference>
<dbReference type="FunFam" id="3.30.30.10:FF:000003">
    <property type="entry name" value="Defensin-like protein 1"/>
    <property type="match status" value="1"/>
</dbReference>
<dbReference type="Gene3D" id="3.30.30.10">
    <property type="entry name" value="Knottin, scorpion toxin-like"/>
    <property type="match status" value="1"/>
</dbReference>
<dbReference type="InterPro" id="IPR008176">
    <property type="entry name" value="Defensin_plant"/>
</dbReference>
<dbReference type="InterPro" id="IPR003614">
    <property type="entry name" value="Scorpion_toxin-like"/>
</dbReference>
<dbReference type="InterPro" id="IPR036574">
    <property type="entry name" value="Scorpion_toxin-like_sf"/>
</dbReference>
<dbReference type="Pfam" id="PF00304">
    <property type="entry name" value="Gamma-thionin"/>
    <property type="match status" value="1"/>
</dbReference>
<dbReference type="SMART" id="SM00505">
    <property type="entry name" value="Knot1"/>
    <property type="match status" value="1"/>
</dbReference>
<dbReference type="SUPFAM" id="SSF57095">
    <property type="entry name" value="Scorpion toxin-like"/>
    <property type="match status" value="1"/>
</dbReference>
<dbReference type="PROSITE" id="PS00940">
    <property type="entry name" value="GAMMA_THIONIN"/>
    <property type="match status" value="1"/>
</dbReference>
<name>DEF1_SINAL</name>
<organism>
    <name type="scientific">Sinapis alba</name>
    <name type="common">White mustard</name>
    <name type="synonym">Brassica hirta</name>
    <dbReference type="NCBI Taxonomy" id="3728"/>
    <lineage>
        <taxon>Eukaryota</taxon>
        <taxon>Viridiplantae</taxon>
        <taxon>Streptophyta</taxon>
        <taxon>Embryophyta</taxon>
        <taxon>Tracheophyta</taxon>
        <taxon>Spermatophyta</taxon>
        <taxon>Magnoliopsida</taxon>
        <taxon>eudicotyledons</taxon>
        <taxon>Gunneridae</taxon>
        <taxon>Pentapetalae</taxon>
        <taxon>rosids</taxon>
        <taxon>malvids</taxon>
        <taxon>Brassicales</taxon>
        <taxon>Brassicaceae</taxon>
        <taxon>Brassiceae</taxon>
        <taxon>Sinapis</taxon>
    </lineage>
</organism>
<sequence length="51" mass="5695">QKLCERPSGTWSGVCGNNNACKNQCINLEKARHGSCNYVFPAHKCICYFPC</sequence>